<name>FTRL_METTH</name>
<keyword id="KW-1185">Reference proteome</keyword>
<keyword id="KW-0808">Transferase</keyword>
<sequence length="297" mass="32693">MEINGTLIEDTFSEAFTGRCVRATITARDMETVRRAALDATATPGAVIGRVEGGVESFLGGEDTPDGRPGAVVQFYYALDDMEKFQVELSYRIRQDILVKPFTALYSSTPDPDGYLDMMKHVGHCGDGYEWLEEFNGREMINVPVAVPDFKIESRMGYREAIMGANFWYMCRDPDTVLEAGRAAIRAIEEVEGVVTPFDICSAASKPETNYPWIGPTTNHPYCPSLKEVLGDESRVPEGVGYIPEIVINGLTMEALEEAMRAGIEAVCRYDGVLRVSAGNYDGKLGDHRIDLHGVLG</sequence>
<dbReference type="EMBL" id="AE000666">
    <property type="protein sequence ID" value="AAB84909.1"/>
    <property type="molecule type" value="Genomic_DNA"/>
</dbReference>
<dbReference type="PIR" id="E69152">
    <property type="entry name" value="E69152"/>
</dbReference>
<dbReference type="RefSeq" id="WP_010876042.1">
    <property type="nucleotide sequence ID" value="NC_000916.1"/>
</dbReference>
<dbReference type="SMR" id="O26503"/>
<dbReference type="STRING" id="187420.MTH_403"/>
<dbReference type="PaxDb" id="187420-MTH_403"/>
<dbReference type="EnsemblBacteria" id="AAB84909">
    <property type="protein sequence ID" value="AAB84909"/>
    <property type="gene ID" value="MTH_403"/>
</dbReference>
<dbReference type="GeneID" id="1470364"/>
<dbReference type="KEGG" id="mth:MTH_403"/>
<dbReference type="PATRIC" id="fig|187420.15.peg.372"/>
<dbReference type="HOGENOM" id="CLU_081314_0_0_2"/>
<dbReference type="InParanoid" id="O26503"/>
<dbReference type="Proteomes" id="UP000005223">
    <property type="component" value="Chromosome"/>
</dbReference>
<dbReference type="GO" id="GO:0030270">
    <property type="term" value="F:formylmethanofuran-tetrahydromethanopterin N-formyltransferase activity"/>
    <property type="evidence" value="ECO:0007669"/>
    <property type="project" value="InterPro"/>
</dbReference>
<dbReference type="GO" id="GO:0006730">
    <property type="term" value="P:one-carbon metabolic process"/>
    <property type="evidence" value="ECO:0007669"/>
    <property type="project" value="InterPro"/>
</dbReference>
<dbReference type="Gene3D" id="3.30.70.520">
    <property type="match status" value="2"/>
</dbReference>
<dbReference type="InterPro" id="IPR014053">
    <property type="entry name" value="ForMFR_H4MPT_ForTrfase"/>
</dbReference>
<dbReference type="InterPro" id="IPR002770">
    <property type="entry name" value="ForMFR_H4MPT_ForTrfase_C"/>
</dbReference>
<dbReference type="InterPro" id="IPR023447">
    <property type="entry name" value="ForMFR_H4MPT_ForTrfase_fd-like"/>
</dbReference>
<dbReference type="InterPro" id="IPR022667">
    <property type="entry name" value="ForMFR_H4MPT_ForTrfase_N"/>
</dbReference>
<dbReference type="NCBIfam" id="NF002554">
    <property type="entry name" value="PRK02114.1"/>
    <property type="match status" value="1"/>
</dbReference>
<dbReference type="Pfam" id="PF01913">
    <property type="entry name" value="FTR"/>
    <property type="match status" value="1"/>
</dbReference>
<dbReference type="Pfam" id="PF02741">
    <property type="entry name" value="FTR_C"/>
    <property type="match status" value="1"/>
</dbReference>
<dbReference type="PIRSF" id="PIRSF006414">
    <property type="entry name" value="Ftr_formyl_trnsf"/>
    <property type="match status" value="1"/>
</dbReference>
<dbReference type="SUPFAM" id="SSF55112">
    <property type="entry name" value="Formylmethanofuran:tetrahydromethanopterin formyltransferase"/>
    <property type="match status" value="2"/>
</dbReference>
<feature type="chain" id="PRO_0000138128" description="Formylmethanofuran--tetrahydromethanopterin formyltransferase-like protein">
    <location>
        <begin position="1"/>
        <end position="297"/>
    </location>
</feature>
<organism>
    <name type="scientific">Methanothermobacter thermautotrophicus (strain ATCC 29096 / DSM 1053 / JCM 10044 / NBRC 100330 / Delta H)</name>
    <name type="common">Methanobacterium thermoautotrophicum</name>
    <dbReference type="NCBI Taxonomy" id="187420"/>
    <lineage>
        <taxon>Archaea</taxon>
        <taxon>Methanobacteriati</taxon>
        <taxon>Methanobacteriota</taxon>
        <taxon>Methanomada group</taxon>
        <taxon>Methanobacteria</taxon>
        <taxon>Methanobacteriales</taxon>
        <taxon>Methanobacteriaceae</taxon>
        <taxon>Methanothermobacter</taxon>
    </lineage>
</organism>
<protein>
    <recommendedName>
        <fullName>Formylmethanofuran--tetrahydromethanopterin formyltransferase-like protein</fullName>
    </recommendedName>
</protein>
<evidence type="ECO:0000305" key="1"/>
<comment type="similarity">
    <text evidence="1">Belongs to the FTR family.</text>
</comment>
<accession>O26503</accession>
<reference key="1">
    <citation type="journal article" date="1997" name="J. Bacteriol.">
        <title>Complete genome sequence of Methanobacterium thermoautotrophicum deltaH: functional analysis and comparative genomics.</title>
        <authorList>
            <person name="Smith D.R."/>
            <person name="Doucette-Stamm L.A."/>
            <person name="Deloughery C."/>
            <person name="Lee H.-M."/>
            <person name="Dubois J."/>
            <person name="Aldredge T."/>
            <person name="Bashirzadeh R."/>
            <person name="Blakely D."/>
            <person name="Cook R."/>
            <person name="Gilbert K."/>
            <person name="Harrison D."/>
            <person name="Hoang L."/>
            <person name="Keagle P."/>
            <person name="Lumm W."/>
            <person name="Pothier B."/>
            <person name="Qiu D."/>
            <person name="Spadafora R."/>
            <person name="Vicare R."/>
            <person name="Wang Y."/>
            <person name="Wierzbowski J."/>
            <person name="Gibson R."/>
            <person name="Jiwani N."/>
            <person name="Caruso A."/>
            <person name="Bush D."/>
            <person name="Safer H."/>
            <person name="Patwell D."/>
            <person name="Prabhakar S."/>
            <person name="McDougall S."/>
            <person name="Shimer G."/>
            <person name="Goyal A."/>
            <person name="Pietrovski S."/>
            <person name="Church G.M."/>
            <person name="Daniels C.J."/>
            <person name="Mao J.-I."/>
            <person name="Rice P."/>
            <person name="Noelling J."/>
            <person name="Reeve J.N."/>
        </authorList>
    </citation>
    <scope>NUCLEOTIDE SEQUENCE [LARGE SCALE GENOMIC DNA]</scope>
    <source>
        <strain>ATCC 29096 / DSM 1053 / JCM 10044 / NBRC 100330 / Delta H</strain>
    </source>
</reference>
<gene>
    <name type="primary">ehaS</name>
    <name type="ordered locus">MTH_403</name>
</gene>
<proteinExistence type="inferred from homology"/>